<evidence type="ECO:0000255" key="1"/>
<evidence type="ECO:0000255" key="2">
    <source>
        <dbReference type="PROSITE-ProRule" id="PRU00114"/>
    </source>
</evidence>
<evidence type="ECO:0000305" key="3"/>
<reference key="1">
    <citation type="journal article" date="1996" name="Proc. Natl. Acad. Sci. U.S.A.">
        <title>Nucleotide sequence of the Kaposi sarcoma-associated herpesvirus (HHV8).</title>
        <authorList>
            <person name="Russo J.J."/>
            <person name="Bohenzky R.A."/>
            <person name="Chien M.-C."/>
            <person name="Chen J."/>
            <person name="Yan M."/>
            <person name="Maddalena D."/>
            <person name="Parry J.P."/>
            <person name="Peruzzi D."/>
            <person name="Edelman I.S."/>
            <person name="Chang Y."/>
            <person name="Moore P.S."/>
        </authorList>
    </citation>
    <scope>NUCLEOTIDE SEQUENCE [GENOMIC DNA]</scope>
</reference>
<reference key="2">
    <citation type="submission" date="1996-03" db="EMBL/GenBank/DDBJ databases">
        <title>KSHV contains a homolog to OX-2.</title>
        <authorList>
            <person name="Bohenzky R.A."/>
            <person name="Russo J.J."/>
            <person name="Moore P.S."/>
            <person name="Chang Y."/>
        </authorList>
    </citation>
    <scope>NUCLEOTIDE SEQUENCE [GENOMIC DNA]</scope>
</reference>
<reference key="3">
    <citation type="journal article" date="2001" name="Virology">
        <title>Expression of Kaposi's sarcoma-associated herpesvirus G protein-coupled receptor monocistronic and bicistronic transcripts in primary effusion lymphomas.</title>
        <authorList>
            <person name="Nador R.G."/>
            <person name="Milligan L.L."/>
            <person name="Flore O."/>
            <person name="Wang X."/>
            <person name="Arvanitakis L."/>
            <person name="Knowles D.M."/>
            <person name="Cesarman E."/>
        </authorList>
    </citation>
    <scope>NUCLEOTIDE SEQUENCE [MRNA]</scope>
</reference>
<reference key="4">
    <citation type="submission" date="2006-02" db="EMBL/GenBank/DDBJ databases">
        <authorList>
            <person name="Davison A.J."/>
        </authorList>
    </citation>
    <scope>SEQUENCE REVISION TO N-TERMINUS</scope>
</reference>
<reference key="5">
    <citation type="journal article" date="2002" name="J. Virol.">
        <title>Kaposi's sarcoma-associated herpesvirus OX2 glycoprotein activates myeloid-lineage cells to induce inflammatory cytokine production.</title>
        <authorList>
            <person name="Chung Y.-H."/>
            <person name="Means R.E."/>
            <person name="Choi J.-K."/>
            <person name="Lee B.-S."/>
            <person name="Jung J.U."/>
        </authorList>
    </citation>
    <scope>CHARACTERIZATION</scope>
</reference>
<organism>
    <name type="scientific">Human herpesvirus 8 type P (isolate GK18)</name>
    <name type="common">HHV-8</name>
    <name type="synonym">Kaposi's sarcoma-associated herpesvirus</name>
    <dbReference type="NCBI Taxonomy" id="868565"/>
    <lineage>
        <taxon>Viruses</taxon>
        <taxon>Duplodnaviria</taxon>
        <taxon>Heunggongvirae</taxon>
        <taxon>Peploviricota</taxon>
        <taxon>Herviviricetes</taxon>
        <taxon>Herpesvirales</taxon>
        <taxon>Orthoherpesviridae</taxon>
        <taxon>Gammaherpesvirinae</taxon>
        <taxon>Rhadinovirus</taxon>
        <taxon>Rhadinovirus humangamma8</taxon>
        <taxon>Human herpesvirus 8</taxon>
    </lineage>
</organism>
<dbReference type="EMBL" id="U75698">
    <property type="protein sequence ID" value="AAC57159.1"/>
    <property type="status" value="ALT_INIT"/>
    <property type="molecule type" value="Genomic_DNA"/>
</dbReference>
<dbReference type="EMBL" id="U52065">
    <property type="protein sequence ID" value="AAB39927.1"/>
    <property type="status" value="ALT_INIT"/>
    <property type="molecule type" value="Genomic_DNA"/>
</dbReference>
<dbReference type="EMBL" id="AF148805">
    <property type="protein sequence ID" value="AAD46502.2"/>
    <property type="molecule type" value="Genomic_DNA"/>
</dbReference>
<dbReference type="EMBL" id="AF367765">
    <property type="protein sequence ID" value="AAK53415.1"/>
    <property type="status" value="ALT_INIT"/>
    <property type="molecule type" value="mRNA"/>
</dbReference>
<dbReference type="EMBL" id="AF367766">
    <property type="protein sequence ID" value="AAK53417.1"/>
    <property type="status" value="ALT_INIT"/>
    <property type="molecule type" value="mRNA"/>
</dbReference>
<dbReference type="RefSeq" id="YP_001129432.1">
    <property type="nucleotide sequence ID" value="NC_009333.1"/>
</dbReference>
<dbReference type="SMR" id="P0C788"/>
<dbReference type="BioGRID" id="1776968">
    <property type="interactions" value="21"/>
</dbReference>
<dbReference type="GlyCosmos" id="P0C788">
    <property type="glycosylation" value="6 sites, No reported glycans"/>
</dbReference>
<dbReference type="KEGG" id="vg:4961465"/>
<dbReference type="Proteomes" id="UP000000942">
    <property type="component" value="Segment"/>
</dbReference>
<dbReference type="GO" id="GO:0020002">
    <property type="term" value="C:host cell plasma membrane"/>
    <property type="evidence" value="ECO:0007669"/>
    <property type="project" value="UniProtKB-SubCell"/>
</dbReference>
<dbReference type="GO" id="GO:0016020">
    <property type="term" value="C:membrane"/>
    <property type="evidence" value="ECO:0007669"/>
    <property type="project" value="UniProtKB-KW"/>
</dbReference>
<dbReference type="GO" id="GO:0098632">
    <property type="term" value="F:cell-cell adhesion mediator activity"/>
    <property type="evidence" value="ECO:0007669"/>
    <property type="project" value="InterPro"/>
</dbReference>
<dbReference type="GO" id="GO:0034113">
    <property type="term" value="P:heterotypic cell-cell adhesion"/>
    <property type="evidence" value="ECO:0007669"/>
    <property type="project" value="TreeGrafter"/>
</dbReference>
<dbReference type="Gene3D" id="2.60.40.10">
    <property type="entry name" value="Immunoglobulins"/>
    <property type="match status" value="2"/>
</dbReference>
<dbReference type="InterPro" id="IPR007110">
    <property type="entry name" value="Ig-like_dom"/>
</dbReference>
<dbReference type="InterPro" id="IPR036179">
    <property type="entry name" value="Ig-like_dom_sf"/>
</dbReference>
<dbReference type="InterPro" id="IPR013783">
    <property type="entry name" value="Ig-like_fold"/>
</dbReference>
<dbReference type="InterPro" id="IPR003599">
    <property type="entry name" value="Ig_sub"/>
</dbReference>
<dbReference type="InterPro" id="IPR013106">
    <property type="entry name" value="Ig_V-set"/>
</dbReference>
<dbReference type="InterPro" id="IPR047164">
    <property type="entry name" value="OX2G-like"/>
</dbReference>
<dbReference type="PANTHER" id="PTHR46841">
    <property type="entry name" value="OX-2 MEMBRANE GLYCOPROTEIN"/>
    <property type="match status" value="1"/>
</dbReference>
<dbReference type="PANTHER" id="PTHR46841:SF3">
    <property type="entry name" value="OX-2 MEMBRANE GLYCOPROTEIN"/>
    <property type="match status" value="1"/>
</dbReference>
<dbReference type="Pfam" id="PF07686">
    <property type="entry name" value="V-set"/>
    <property type="match status" value="1"/>
</dbReference>
<dbReference type="SMART" id="SM00409">
    <property type="entry name" value="IG"/>
    <property type="match status" value="1"/>
</dbReference>
<dbReference type="SUPFAM" id="SSF48726">
    <property type="entry name" value="Immunoglobulin"/>
    <property type="match status" value="2"/>
</dbReference>
<dbReference type="PROSITE" id="PS50835">
    <property type="entry name" value="IG_LIKE"/>
    <property type="match status" value="1"/>
</dbReference>
<protein>
    <recommendedName>
        <fullName>OX-2 membrane glycoprotein homolog</fullName>
    </recommendedName>
    <alternativeName>
        <fullName>Viral OX2</fullName>
        <shortName>vOX2</shortName>
    </alternativeName>
</protein>
<name>OX2V_HHV8P</name>
<sequence>MSSLFISLPWVAFIWLALLGAVGGARVQGPMRGSAALTCAITPRADIVSVTWQKRQLPGPVNVATYSHSYGVVVQTQYRHKANITCPGLWNSTLVIHNLAVDDEGCYLCIFNSFGGRQVSCTACLEVTSPPTGHVQVNSTEDADTVTCLATGRPPPNVTWAAPWNNASSTQEQFTDSDGLTVAWRTVRLPRGDNTTPSEGICLITWGNESISIPASIQGPLAHDLPAAQGTLAGVAITLVGLFGIFALHHCRRKQGGASPTSDDMDPLSTQ</sequence>
<accession>P0C788</accession>
<accession>P0C789</accession>
<accession>P88963</accession>
<accession>Q98149</accession>
<gene>
    <name type="primary">K14</name>
</gene>
<proteinExistence type="evidence at protein level"/>
<organismHost>
    <name type="scientific">Homo sapiens</name>
    <name type="common">Human</name>
    <dbReference type="NCBI Taxonomy" id="9606"/>
</organismHost>
<feature type="signal peptide" evidence="1">
    <location>
        <begin position="1"/>
        <end position="24"/>
    </location>
</feature>
<feature type="chain" id="PRO_0000015127" description="OX-2 membrane glycoprotein homolog">
    <location>
        <begin position="25"/>
        <end position="271"/>
    </location>
</feature>
<feature type="topological domain" description="Extracellular" evidence="1">
    <location>
        <begin position="25"/>
        <end position="227"/>
    </location>
</feature>
<feature type="transmembrane region" description="Helical" evidence="1">
    <location>
        <begin position="228"/>
        <end position="248"/>
    </location>
</feature>
<feature type="topological domain" description="Cytoplasmic" evidence="1">
    <location>
        <begin position="249"/>
        <end position="271"/>
    </location>
</feature>
<feature type="domain" description="Ig-like V-type">
    <location>
        <begin position="26"/>
        <end position="129"/>
    </location>
</feature>
<feature type="domain" description="Ig-like C2-type">
    <location>
        <begin position="130"/>
        <end position="220"/>
    </location>
</feature>
<feature type="glycosylation site" description="N-linked (GlcNAc...) asparagine; by host" evidence="1">
    <location>
        <position position="83"/>
    </location>
</feature>
<feature type="glycosylation site" description="N-linked (GlcNAc...) asparagine; by host" evidence="1">
    <location>
        <position position="91"/>
    </location>
</feature>
<feature type="glycosylation site" description="N-linked (GlcNAc...) asparagine; by host" evidence="1">
    <location>
        <position position="138"/>
    </location>
</feature>
<feature type="glycosylation site" description="N-linked (GlcNAc...) asparagine; by host" evidence="1">
    <location>
        <position position="157"/>
    </location>
</feature>
<feature type="glycosylation site" description="N-linked (GlcNAc...) asparagine; by host" evidence="1">
    <location>
        <position position="166"/>
    </location>
</feature>
<feature type="glycosylation site" description="N-linked (GlcNAc...) asparagine; by host" evidence="1">
    <location>
        <position position="208"/>
    </location>
</feature>
<feature type="disulfide bond" evidence="2">
    <location>
        <begin position="39"/>
        <end position="109"/>
    </location>
</feature>
<feature type="disulfide bond" evidence="2">
    <location>
        <begin position="148"/>
        <end position="202"/>
    </location>
</feature>
<keyword id="KW-1015">Disulfide bond</keyword>
<keyword id="KW-0325">Glycoprotein</keyword>
<keyword id="KW-1032">Host cell membrane</keyword>
<keyword id="KW-1043">Host membrane</keyword>
<keyword id="KW-0945">Host-virus interaction</keyword>
<keyword id="KW-0393">Immunoglobulin domain</keyword>
<keyword id="KW-0472">Membrane</keyword>
<keyword id="KW-1185">Reference proteome</keyword>
<keyword id="KW-0732">Signal</keyword>
<keyword id="KW-0812">Transmembrane</keyword>
<keyword id="KW-1133">Transmembrane helix</keyword>
<comment type="function">
    <text>Dramatically stimulates primary monocytes, macrophages, and dendritic cells to produce the inflammatory cytokines interleukin 1-beta, IL-6, monocyte chemoattractant protein 1, and TNF-alpha. The induction of inflammatory cytokine production potentially promotes the cytokine-mediated angiogenic proliferation of KSHV-infected cells.</text>
</comment>
<comment type="subunit">
    <text>Interacts with human CD200R1.</text>
</comment>
<comment type="subcellular location">
    <subcellularLocation>
        <location>Host cell membrane</location>
        <topology>Single-pass type I membrane protein</topology>
    </subcellularLocation>
</comment>
<comment type="PTM">
    <text>N-glycosylated.</text>
</comment>
<comment type="sequence caution" evidence="3">
    <conflict type="erroneous initiation">
        <sequence resource="EMBL-CDS" id="AAB39927"/>
    </conflict>
</comment>
<comment type="sequence caution" evidence="3">
    <conflict type="erroneous initiation">
        <sequence resource="EMBL-CDS" id="AAC57159"/>
    </conflict>
</comment>
<comment type="sequence caution" evidence="3">
    <conflict type="erroneous initiation">
        <sequence resource="EMBL-CDS" id="AAK53415"/>
    </conflict>
</comment>
<comment type="sequence caution" evidence="3">
    <conflict type="erroneous initiation">
        <sequence resource="EMBL-CDS" id="AAK53417"/>
    </conflict>
</comment>